<accession>C5C3G5</accession>
<reference key="1">
    <citation type="journal article" date="2009" name="Stand. Genomic Sci.">
        <title>Complete genome sequence of Beutenbergia cavernae type strain (HKI 0122).</title>
        <authorList>
            <person name="Land M."/>
            <person name="Pukall R."/>
            <person name="Abt B."/>
            <person name="Goker M."/>
            <person name="Rohde M."/>
            <person name="Glavina Del Rio T."/>
            <person name="Tice H."/>
            <person name="Copeland A."/>
            <person name="Cheng J.F."/>
            <person name="Lucas S."/>
            <person name="Chen F."/>
            <person name="Nolan M."/>
            <person name="Bruce D."/>
            <person name="Goodwin L."/>
            <person name="Pitluck S."/>
            <person name="Ivanova N."/>
            <person name="Mavromatis K."/>
            <person name="Ovchinnikova G."/>
            <person name="Pati A."/>
            <person name="Chen A."/>
            <person name="Palaniappan K."/>
            <person name="Hauser L."/>
            <person name="Chang Y.J."/>
            <person name="Jefferies C.C."/>
            <person name="Saunders E."/>
            <person name="Brettin T."/>
            <person name="Detter J.C."/>
            <person name="Han C."/>
            <person name="Chain P."/>
            <person name="Bristow J."/>
            <person name="Eisen J.A."/>
            <person name="Markowitz V."/>
            <person name="Hugenholtz P."/>
            <person name="Kyrpides N.C."/>
            <person name="Klenk H.P."/>
            <person name="Lapidus A."/>
        </authorList>
    </citation>
    <scope>NUCLEOTIDE SEQUENCE [LARGE SCALE GENOMIC DNA]</scope>
    <source>
        <strain>ATCC BAA-8 / DSM 12333 / CCUG 43141 / JCM 11478 / NBRC 16432 / NCIMB 13614 / HKI 0122</strain>
    </source>
</reference>
<evidence type="ECO:0000255" key="1">
    <source>
        <dbReference type="HAMAP-Rule" id="MF_00340"/>
    </source>
</evidence>
<evidence type="ECO:0000256" key="2">
    <source>
        <dbReference type="SAM" id="MobiDB-lite"/>
    </source>
</evidence>
<evidence type="ECO:0000305" key="3"/>
<gene>
    <name evidence="1" type="primary">rpmF</name>
    <name type="ordered locus">Bcav_1608</name>
</gene>
<name>RL32_BEUC1</name>
<keyword id="KW-1185">Reference proteome</keyword>
<keyword id="KW-0687">Ribonucleoprotein</keyword>
<keyword id="KW-0689">Ribosomal protein</keyword>
<comment type="similarity">
    <text evidence="1">Belongs to the bacterial ribosomal protein bL32 family.</text>
</comment>
<feature type="chain" id="PRO_1000205255" description="Large ribosomal subunit protein bL32">
    <location>
        <begin position="1"/>
        <end position="66"/>
    </location>
</feature>
<feature type="region of interest" description="Disordered" evidence="2">
    <location>
        <begin position="1"/>
        <end position="20"/>
    </location>
</feature>
<feature type="compositionally biased region" description="Basic residues" evidence="2">
    <location>
        <begin position="1"/>
        <end position="19"/>
    </location>
</feature>
<organism>
    <name type="scientific">Beutenbergia cavernae (strain ATCC BAA-8 / DSM 12333 / CCUG 43141 / JCM 11478 / NBRC 16432 / NCIMB 13614 / HKI 0122)</name>
    <dbReference type="NCBI Taxonomy" id="471853"/>
    <lineage>
        <taxon>Bacteria</taxon>
        <taxon>Bacillati</taxon>
        <taxon>Actinomycetota</taxon>
        <taxon>Actinomycetes</taxon>
        <taxon>Micrococcales</taxon>
        <taxon>Beutenbergiaceae</taxon>
        <taxon>Beutenbergia</taxon>
    </lineage>
</organism>
<proteinExistence type="inferred from homology"/>
<dbReference type="EMBL" id="CP001618">
    <property type="protein sequence ID" value="ACQ79864.1"/>
    <property type="molecule type" value="Genomic_DNA"/>
</dbReference>
<dbReference type="RefSeq" id="WP_015882104.1">
    <property type="nucleotide sequence ID" value="NC_012669.1"/>
</dbReference>
<dbReference type="SMR" id="C5C3G5"/>
<dbReference type="STRING" id="471853.Bcav_1608"/>
<dbReference type="KEGG" id="bcv:Bcav_1608"/>
<dbReference type="eggNOG" id="COG0333">
    <property type="taxonomic scope" value="Bacteria"/>
</dbReference>
<dbReference type="HOGENOM" id="CLU_129084_1_1_11"/>
<dbReference type="OrthoDB" id="9807363at2"/>
<dbReference type="Proteomes" id="UP000007962">
    <property type="component" value="Chromosome"/>
</dbReference>
<dbReference type="GO" id="GO:0015934">
    <property type="term" value="C:large ribosomal subunit"/>
    <property type="evidence" value="ECO:0007669"/>
    <property type="project" value="InterPro"/>
</dbReference>
<dbReference type="GO" id="GO:0003735">
    <property type="term" value="F:structural constituent of ribosome"/>
    <property type="evidence" value="ECO:0007669"/>
    <property type="project" value="InterPro"/>
</dbReference>
<dbReference type="GO" id="GO:0006412">
    <property type="term" value="P:translation"/>
    <property type="evidence" value="ECO:0007669"/>
    <property type="project" value="UniProtKB-UniRule"/>
</dbReference>
<dbReference type="HAMAP" id="MF_00340">
    <property type="entry name" value="Ribosomal_bL32"/>
    <property type="match status" value="1"/>
</dbReference>
<dbReference type="InterPro" id="IPR002677">
    <property type="entry name" value="Ribosomal_bL32"/>
</dbReference>
<dbReference type="InterPro" id="IPR044957">
    <property type="entry name" value="Ribosomal_bL32_bact"/>
</dbReference>
<dbReference type="InterPro" id="IPR011332">
    <property type="entry name" value="Ribosomal_zn-bd"/>
</dbReference>
<dbReference type="NCBIfam" id="TIGR01031">
    <property type="entry name" value="rpmF_bact"/>
    <property type="match status" value="1"/>
</dbReference>
<dbReference type="PANTHER" id="PTHR35534">
    <property type="entry name" value="50S RIBOSOMAL PROTEIN L32"/>
    <property type="match status" value="1"/>
</dbReference>
<dbReference type="PANTHER" id="PTHR35534:SF1">
    <property type="entry name" value="LARGE RIBOSOMAL SUBUNIT PROTEIN BL32"/>
    <property type="match status" value="1"/>
</dbReference>
<dbReference type="Pfam" id="PF01783">
    <property type="entry name" value="Ribosomal_L32p"/>
    <property type="match status" value="1"/>
</dbReference>
<dbReference type="SUPFAM" id="SSF57829">
    <property type="entry name" value="Zn-binding ribosomal proteins"/>
    <property type="match status" value="1"/>
</dbReference>
<protein>
    <recommendedName>
        <fullName evidence="1">Large ribosomal subunit protein bL32</fullName>
    </recommendedName>
    <alternativeName>
        <fullName evidence="3">50S ribosomal protein L32</fullName>
    </alternativeName>
</protein>
<sequence>MAVPKRKMSRSNTRARRSQWKATAATLTTCENCKAPRQSHQACPQCGQYAGRTYAEAIRTDAVETR</sequence>